<proteinExistence type="inferred from homology"/>
<name>NDK_NITOC</name>
<protein>
    <recommendedName>
        <fullName evidence="1">Nucleoside diphosphate kinase</fullName>
        <shortName evidence="1">NDK</shortName>
        <shortName evidence="1">NDP kinase</shortName>
        <ecNumber evidence="1">2.7.4.6</ecNumber>
    </recommendedName>
    <alternativeName>
        <fullName evidence="1">Nucleoside-2-P kinase</fullName>
    </alternativeName>
</protein>
<organism>
    <name type="scientific">Nitrosococcus oceani (strain ATCC 19707 / BCRC 17464 / JCM 30415 / NCIMB 11848 / C-107)</name>
    <dbReference type="NCBI Taxonomy" id="323261"/>
    <lineage>
        <taxon>Bacteria</taxon>
        <taxon>Pseudomonadati</taxon>
        <taxon>Pseudomonadota</taxon>
        <taxon>Gammaproteobacteria</taxon>
        <taxon>Chromatiales</taxon>
        <taxon>Chromatiaceae</taxon>
        <taxon>Nitrosococcus</taxon>
    </lineage>
</organism>
<evidence type="ECO:0000255" key="1">
    <source>
        <dbReference type="HAMAP-Rule" id="MF_00451"/>
    </source>
</evidence>
<accession>Q3JCN5</accession>
<feature type="chain" id="PRO_0000226565" description="Nucleoside diphosphate kinase">
    <location>
        <begin position="1"/>
        <end position="143"/>
    </location>
</feature>
<feature type="active site" description="Pros-phosphohistidine intermediate" evidence="1">
    <location>
        <position position="117"/>
    </location>
</feature>
<feature type="binding site" evidence="1">
    <location>
        <position position="11"/>
    </location>
    <ligand>
        <name>ATP</name>
        <dbReference type="ChEBI" id="CHEBI:30616"/>
    </ligand>
</feature>
<feature type="binding site" evidence="1">
    <location>
        <position position="59"/>
    </location>
    <ligand>
        <name>ATP</name>
        <dbReference type="ChEBI" id="CHEBI:30616"/>
    </ligand>
</feature>
<feature type="binding site" evidence="1">
    <location>
        <position position="87"/>
    </location>
    <ligand>
        <name>ATP</name>
        <dbReference type="ChEBI" id="CHEBI:30616"/>
    </ligand>
</feature>
<feature type="binding site" evidence="1">
    <location>
        <position position="93"/>
    </location>
    <ligand>
        <name>ATP</name>
        <dbReference type="ChEBI" id="CHEBI:30616"/>
    </ligand>
</feature>
<feature type="binding site" evidence="1">
    <location>
        <position position="104"/>
    </location>
    <ligand>
        <name>ATP</name>
        <dbReference type="ChEBI" id="CHEBI:30616"/>
    </ligand>
</feature>
<feature type="binding site" evidence="1">
    <location>
        <position position="114"/>
    </location>
    <ligand>
        <name>ATP</name>
        <dbReference type="ChEBI" id="CHEBI:30616"/>
    </ligand>
</feature>
<keyword id="KW-0067">ATP-binding</keyword>
<keyword id="KW-0963">Cytoplasm</keyword>
<keyword id="KW-0418">Kinase</keyword>
<keyword id="KW-0460">Magnesium</keyword>
<keyword id="KW-0479">Metal-binding</keyword>
<keyword id="KW-0546">Nucleotide metabolism</keyword>
<keyword id="KW-0547">Nucleotide-binding</keyword>
<keyword id="KW-0597">Phosphoprotein</keyword>
<keyword id="KW-1185">Reference proteome</keyword>
<keyword id="KW-0808">Transferase</keyword>
<sequence>MVIERTLSIIKPDAVAKNIIGEIYTRFENAGLRIVAARMLHLSKEQAQEFYTVHKDRPFYNDLVGFMTSGPVMVQVLEGENAIARNREIMGATNPKEAVPGTIRADFAENIDANAVHGSDGSGTAEQEINFFFKSEDICPRIG</sequence>
<gene>
    <name evidence="1" type="primary">ndk</name>
    <name type="ordered locus">Noc_0899</name>
</gene>
<reference key="1">
    <citation type="journal article" date="2006" name="Appl. Environ. Microbiol.">
        <title>Complete genome sequence of the marine, chemolithoautotrophic, ammonia-oxidizing bacterium Nitrosococcus oceani ATCC 19707.</title>
        <authorList>
            <person name="Klotz M.G."/>
            <person name="Arp D.J."/>
            <person name="Chain P.S.G."/>
            <person name="El-Sheikh A.F."/>
            <person name="Hauser L.J."/>
            <person name="Hommes N.G."/>
            <person name="Larimer F.W."/>
            <person name="Malfatti S.A."/>
            <person name="Norton J.M."/>
            <person name="Poret-Peterson A.T."/>
            <person name="Vergez L.M."/>
            <person name="Ward B.B."/>
        </authorList>
    </citation>
    <scope>NUCLEOTIDE SEQUENCE [LARGE SCALE GENOMIC DNA]</scope>
    <source>
        <strain>ATCC 19707 / BCRC 17464 / JCM 30415 / NCIMB 11848 / C-107</strain>
    </source>
</reference>
<comment type="function">
    <text evidence="1">Major role in the synthesis of nucleoside triphosphates other than ATP. The ATP gamma phosphate is transferred to the NDP beta phosphate via a ping-pong mechanism, using a phosphorylated active-site intermediate.</text>
</comment>
<comment type="catalytic activity">
    <reaction evidence="1">
        <text>a 2'-deoxyribonucleoside 5'-diphosphate + ATP = a 2'-deoxyribonucleoside 5'-triphosphate + ADP</text>
        <dbReference type="Rhea" id="RHEA:44640"/>
        <dbReference type="ChEBI" id="CHEBI:30616"/>
        <dbReference type="ChEBI" id="CHEBI:61560"/>
        <dbReference type="ChEBI" id="CHEBI:73316"/>
        <dbReference type="ChEBI" id="CHEBI:456216"/>
        <dbReference type="EC" id="2.7.4.6"/>
    </reaction>
</comment>
<comment type="catalytic activity">
    <reaction evidence="1">
        <text>a ribonucleoside 5'-diphosphate + ATP = a ribonucleoside 5'-triphosphate + ADP</text>
        <dbReference type="Rhea" id="RHEA:18113"/>
        <dbReference type="ChEBI" id="CHEBI:30616"/>
        <dbReference type="ChEBI" id="CHEBI:57930"/>
        <dbReference type="ChEBI" id="CHEBI:61557"/>
        <dbReference type="ChEBI" id="CHEBI:456216"/>
        <dbReference type="EC" id="2.7.4.6"/>
    </reaction>
</comment>
<comment type="cofactor">
    <cofactor evidence="1">
        <name>Mg(2+)</name>
        <dbReference type="ChEBI" id="CHEBI:18420"/>
    </cofactor>
</comment>
<comment type="subunit">
    <text evidence="1">Homotetramer.</text>
</comment>
<comment type="subcellular location">
    <subcellularLocation>
        <location evidence="1">Cytoplasm</location>
    </subcellularLocation>
</comment>
<comment type="similarity">
    <text evidence="1">Belongs to the NDK family.</text>
</comment>
<dbReference type="EC" id="2.7.4.6" evidence="1"/>
<dbReference type="EMBL" id="CP000127">
    <property type="protein sequence ID" value="ABA57411.1"/>
    <property type="molecule type" value="Genomic_DNA"/>
</dbReference>
<dbReference type="RefSeq" id="WP_002811566.1">
    <property type="nucleotide sequence ID" value="NC_007484.1"/>
</dbReference>
<dbReference type="SMR" id="Q3JCN5"/>
<dbReference type="FunCoup" id="Q3JCN5">
    <property type="interactions" value="531"/>
</dbReference>
<dbReference type="STRING" id="323261.Noc_0899"/>
<dbReference type="KEGG" id="noc:Noc_0899"/>
<dbReference type="eggNOG" id="COG0105">
    <property type="taxonomic scope" value="Bacteria"/>
</dbReference>
<dbReference type="HOGENOM" id="CLU_060216_8_1_6"/>
<dbReference type="InParanoid" id="Q3JCN5"/>
<dbReference type="Proteomes" id="UP000006838">
    <property type="component" value="Chromosome"/>
</dbReference>
<dbReference type="GO" id="GO:0005737">
    <property type="term" value="C:cytoplasm"/>
    <property type="evidence" value="ECO:0007669"/>
    <property type="project" value="UniProtKB-SubCell"/>
</dbReference>
<dbReference type="GO" id="GO:0005524">
    <property type="term" value="F:ATP binding"/>
    <property type="evidence" value="ECO:0007669"/>
    <property type="project" value="UniProtKB-UniRule"/>
</dbReference>
<dbReference type="GO" id="GO:0046872">
    <property type="term" value="F:metal ion binding"/>
    <property type="evidence" value="ECO:0007669"/>
    <property type="project" value="UniProtKB-KW"/>
</dbReference>
<dbReference type="GO" id="GO:0004550">
    <property type="term" value="F:nucleoside diphosphate kinase activity"/>
    <property type="evidence" value="ECO:0007669"/>
    <property type="project" value="UniProtKB-UniRule"/>
</dbReference>
<dbReference type="GO" id="GO:0006241">
    <property type="term" value="P:CTP biosynthetic process"/>
    <property type="evidence" value="ECO:0007669"/>
    <property type="project" value="UniProtKB-UniRule"/>
</dbReference>
<dbReference type="GO" id="GO:0006183">
    <property type="term" value="P:GTP biosynthetic process"/>
    <property type="evidence" value="ECO:0007669"/>
    <property type="project" value="UniProtKB-UniRule"/>
</dbReference>
<dbReference type="GO" id="GO:0006228">
    <property type="term" value="P:UTP biosynthetic process"/>
    <property type="evidence" value="ECO:0007669"/>
    <property type="project" value="UniProtKB-UniRule"/>
</dbReference>
<dbReference type="CDD" id="cd04413">
    <property type="entry name" value="NDPk_I"/>
    <property type="match status" value="1"/>
</dbReference>
<dbReference type="FunFam" id="3.30.70.141:FF:000001">
    <property type="entry name" value="Nucleoside diphosphate kinase"/>
    <property type="match status" value="1"/>
</dbReference>
<dbReference type="Gene3D" id="3.30.70.141">
    <property type="entry name" value="Nucleoside diphosphate kinase-like domain"/>
    <property type="match status" value="1"/>
</dbReference>
<dbReference type="HAMAP" id="MF_00451">
    <property type="entry name" value="NDP_kinase"/>
    <property type="match status" value="1"/>
</dbReference>
<dbReference type="InterPro" id="IPR034907">
    <property type="entry name" value="NDK-like_dom"/>
</dbReference>
<dbReference type="InterPro" id="IPR036850">
    <property type="entry name" value="NDK-like_dom_sf"/>
</dbReference>
<dbReference type="InterPro" id="IPR001564">
    <property type="entry name" value="Nucleoside_diP_kinase"/>
</dbReference>
<dbReference type="NCBIfam" id="NF001908">
    <property type="entry name" value="PRK00668.1"/>
    <property type="match status" value="1"/>
</dbReference>
<dbReference type="PANTHER" id="PTHR11349">
    <property type="entry name" value="NUCLEOSIDE DIPHOSPHATE KINASE"/>
    <property type="match status" value="1"/>
</dbReference>
<dbReference type="Pfam" id="PF00334">
    <property type="entry name" value="NDK"/>
    <property type="match status" value="1"/>
</dbReference>
<dbReference type="PRINTS" id="PR01243">
    <property type="entry name" value="NUCDPKINASE"/>
</dbReference>
<dbReference type="SMART" id="SM00562">
    <property type="entry name" value="NDK"/>
    <property type="match status" value="1"/>
</dbReference>
<dbReference type="SUPFAM" id="SSF54919">
    <property type="entry name" value="Nucleoside diphosphate kinase, NDK"/>
    <property type="match status" value="1"/>
</dbReference>
<dbReference type="PROSITE" id="PS51374">
    <property type="entry name" value="NDPK_LIKE"/>
    <property type="match status" value="1"/>
</dbReference>